<organism>
    <name type="scientific">Sorangium cellulosum (strain So ce56)</name>
    <name type="common">Polyangium cellulosum (strain So ce56)</name>
    <dbReference type="NCBI Taxonomy" id="448385"/>
    <lineage>
        <taxon>Bacteria</taxon>
        <taxon>Pseudomonadati</taxon>
        <taxon>Myxococcota</taxon>
        <taxon>Polyangia</taxon>
        <taxon>Polyangiales</taxon>
        <taxon>Polyangiaceae</taxon>
        <taxon>Sorangium</taxon>
    </lineage>
</organism>
<comment type="function">
    <text evidence="1">Catalyzes the dehydration of methylthioribulose-1-phosphate (MTRu-1-P) into 2,3-diketo-5-methylthiopentyl-1-phosphate (DK-MTP-1-P).</text>
</comment>
<comment type="catalytic activity">
    <reaction evidence="1">
        <text>5-(methylsulfanyl)-D-ribulose 1-phosphate = 5-methylsulfanyl-2,3-dioxopentyl phosphate + H2O</text>
        <dbReference type="Rhea" id="RHEA:15549"/>
        <dbReference type="ChEBI" id="CHEBI:15377"/>
        <dbReference type="ChEBI" id="CHEBI:58548"/>
        <dbReference type="ChEBI" id="CHEBI:58828"/>
        <dbReference type="EC" id="4.2.1.109"/>
    </reaction>
</comment>
<comment type="cofactor">
    <cofactor evidence="1">
        <name>Zn(2+)</name>
        <dbReference type="ChEBI" id="CHEBI:29105"/>
    </cofactor>
    <text evidence="1">Binds 1 zinc ion per subunit.</text>
</comment>
<comment type="pathway">
    <text evidence="1">Amino-acid biosynthesis; L-methionine biosynthesis via salvage pathway; L-methionine from S-methyl-5-thio-alpha-D-ribose 1-phosphate: step 2/6.</text>
</comment>
<comment type="similarity">
    <text evidence="1">Belongs to the aldolase class II family. MtnB subfamily.</text>
</comment>
<sequence length="212" mass="22421">MSVRGTSFASFSSVAAELIELSRFCHERGWTPATSGNFSARLGDGSLAITASGRPKGALGVSDIVVVNADGRLTGPSPARPSAETALHCQLYRHSSEIGAVAHTHSRAATVLSRRCAQEGYVTLSGYEVAKALSGMTTHTATVLLPVFVNTQDIRRLAEDVDAFMSAHPPVYGYLIAGHGLYTWGSDIASTIRHIEAIEFMLDCALLEGGLS</sequence>
<keyword id="KW-0028">Amino-acid biosynthesis</keyword>
<keyword id="KW-0456">Lyase</keyword>
<keyword id="KW-0479">Metal-binding</keyword>
<keyword id="KW-0486">Methionine biosynthesis</keyword>
<keyword id="KW-1185">Reference proteome</keyword>
<keyword id="KW-0862">Zinc</keyword>
<reference key="1">
    <citation type="journal article" date="2007" name="Nat. Biotechnol.">
        <title>Complete genome sequence of the myxobacterium Sorangium cellulosum.</title>
        <authorList>
            <person name="Schneiker S."/>
            <person name="Perlova O."/>
            <person name="Kaiser O."/>
            <person name="Gerth K."/>
            <person name="Alici A."/>
            <person name="Altmeyer M.O."/>
            <person name="Bartels D."/>
            <person name="Bekel T."/>
            <person name="Beyer S."/>
            <person name="Bode E."/>
            <person name="Bode H.B."/>
            <person name="Bolten C.J."/>
            <person name="Choudhuri J.V."/>
            <person name="Doss S."/>
            <person name="Elnakady Y.A."/>
            <person name="Frank B."/>
            <person name="Gaigalat L."/>
            <person name="Goesmann A."/>
            <person name="Groeger C."/>
            <person name="Gross F."/>
            <person name="Jelsbak L."/>
            <person name="Jelsbak L."/>
            <person name="Kalinowski J."/>
            <person name="Kegler C."/>
            <person name="Knauber T."/>
            <person name="Konietzny S."/>
            <person name="Kopp M."/>
            <person name="Krause L."/>
            <person name="Krug D."/>
            <person name="Linke B."/>
            <person name="Mahmud T."/>
            <person name="Martinez-Arias R."/>
            <person name="McHardy A.C."/>
            <person name="Merai M."/>
            <person name="Meyer F."/>
            <person name="Mormann S."/>
            <person name="Munoz-Dorado J."/>
            <person name="Perez J."/>
            <person name="Pradella S."/>
            <person name="Rachid S."/>
            <person name="Raddatz G."/>
            <person name="Rosenau F."/>
            <person name="Rueckert C."/>
            <person name="Sasse F."/>
            <person name="Scharfe M."/>
            <person name="Schuster S.C."/>
            <person name="Suen G."/>
            <person name="Treuner-Lange A."/>
            <person name="Velicer G.J."/>
            <person name="Vorholter F.-J."/>
            <person name="Weissman K.J."/>
            <person name="Welch R.D."/>
            <person name="Wenzel S.C."/>
            <person name="Whitworth D.E."/>
            <person name="Wilhelm S."/>
            <person name="Wittmann C."/>
            <person name="Bloecker H."/>
            <person name="Puehler A."/>
            <person name="Mueller R."/>
        </authorList>
    </citation>
    <scope>NUCLEOTIDE SEQUENCE [LARGE SCALE GENOMIC DNA]</scope>
    <source>
        <strain>So ce56</strain>
    </source>
</reference>
<protein>
    <recommendedName>
        <fullName evidence="1">Methylthioribulose-1-phosphate dehydratase</fullName>
        <shortName evidence="1">MTRu-1-P dehydratase</shortName>
        <ecNumber evidence="1">4.2.1.109</ecNumber>
    </recommendedName>
</protein>
<proteinExistence type="inferred from homology"/>
<feature type="chain" id="PRO_0000357106" description="Methylthioribulose-1-phosphate dehydratase">
    <location>
        <begin position="1"/>
        <end position="212"/>
    </location>
</feature>
<feature type="binding site" evidence="1">
    <location>
        <position position="103"/>
    </location>
    <ligand>
        <name>Zn(2+)</name>
        <dbReference type="ChEBI" id="CHEBI:29105"/>
    </ligand>
</feature>
<feature type="binding site" evidence="1">
    <location>
        <position position="105"/>
    </location>
    <ligand>
        <name>Zn(2+)</name>
        <dbReference type="ChEBI" id="CHEBI:29105"/>
    </ligand>
</feature>
<name>MTNB_SORC5</name>
<dbReference type="EC" id="4.2.1.109" evidence="1"/>
<dbReference type="EMBL" id="AM746676">
    <property type="protein sequence ID" value="CAN91707.1"/>
    <property type="molecule type" value="Genomic_DNA"/>
</dbReference>
<dbReference type="RefSeq" id="WP_012234184.1">
    <property type="nucleotide sequence ID" value="NC_010162.1"/>
</dbReference>
<dbReference type="SMR" id="A9FCX7"/>
<dbReference type="STRING" id="448385.sce1549"/>
<dbReference type="KEGG" id="scl:sce1549"/>
<dbReference type="eggNOG" id="COG0235">
    <property type="taxonomic scope" value="Bacteria"/>
</dbReference>
<dbReference type="HOGENOM" id="CLU_006033_4_1_7"/>
<dbReference type="OrthoDB" id="5500703at2"/>
<dbReference type="BioCyc" id="SCEL448385:SCE_RS07990-MONOMER"/>
<dbReference type="UniPathway" id="UPA00904">
    <property type="reaction ID" value="UER00875"/>
</dbReference>
<dbReference type="Proteomes" id="UP000002139">
    <property type="component" value="Chromosome"/>
</dbReference>
<dbReference type="GO" id="GO:0005829">
    <property type="term" value="C:cytosol"/>
    <property type="evidence" value="ECO:0007669"/>
    <property type="project" value="TreeGrafter"/>
</dbReference>
<dbReference type="GO" id="GO:0016832">
    <property type="term" value="F:aldehyde-lyase activity"/>
    <property type="evidence" value="ECO:0007669"/>
    <property type="project" value="TreeGrafter"/>
</dbReference>
<dbReference type="GO" id="GO:0046570">
    <property type="term" value="F:methylthioribulose 1-phosphate dehydratase activity"/>
    <property type="evidence" value="ECO:0007669"/>
    <property type="project" value="UniProtKB-UniRule"/>
</dbReference>
<dbReference type="GO" id="GO:0008270">
    <property type="term" value="F:zinc ion binding"/>
    <property type="evidence" value="ECO:0007669"/>
    <property type="project" value="UniProtKB-UniRule"/>
</dbReference>
<dbReference type="GO" id="GO:0019509">
    <property type="term" value="P:L-methionine salvage from methylthioadenosine"/>
    <property type="evidence" value="ECO:0007669"/>
    <property type="project" value="UniProtKB-UniRule"/>
</dbReference>
<dbReference type="GO" id="GO:0019323">
    <property type="term" value="P:pentose catabolic process"/>
    <property type="evidence" value="ECO:0007669"/>
    <property type="project" value="TreeGrafter"/>
</dbReference>
<dbReference type="Gene3D" id="3.40.225.10">
    <property type="entry name" value="Class II aldolase/adducin N-terminal domain"/>
    <property type="match status" value="1"/>
</dbReference>
<dbReference type="HAMAP" id="MF_01677">
    <property type="entry name" value="Salvage_MtnB"/>
    <property type="match status" value="1"/>
</dbReference>
<dbReference type="InterPro" id="IPR050197">
    <property type="entry name" value="Aldolase_class_II_sugar_metab"/>
</dbReference>
<dbReference type="InterPro" id="IPR001303">
    <property type="entry name" value="Aldolase_II/adducin_N"/>
</dbReference>
<dbReference type="InterPro" id="IPR036409">
    <property type="entry name" value="Aldolase_II/adducin_N_sf"/>
</dbReference>
<dbReference type="InterPro" id="IPR017714">
    <property type="entry name" value="MethylthioRu-1-P_deHdtase_MtnB"/>
</dbReference>
<dbReference type="NCBIfam" id="NF006672">
    <property type="entry name" value="PRK09220.1"/>
    <property type="match status" value="1"/>
</dbReference>
<dbReference type="NCBIfam" id="TIGR03328">
    <property type="entry name" value="salvage_mtnB"/>
    <property type="match status" value="1"/>
</dbReference>
<dbReference type="PANTHER" id="PTHR22789:SF0">
    <property type="entry name" value="3-OXO-TETRONATE 4-PHOSPHATE DECARBOXYLASE-RELATED"/>
    <property type="match status" value="1"/>
</dbReference>
<dbReference type="PANTHER" id="PTHR22789">
    <property type="entry name" value="FUCULOSE PHOSPHATE ALDOLASE"/>
    <property type="match status" value="1"/>
</dbReference>
<dbReference type="Pfam" id="PF00596">
    <property type="entry name" value="Aldolase_II"/>
    <property type="match status" value="1"/>
</dbReference>
<dbReference type="SMART" id="SM01007">
    <property type="entry name" value="Aldolase_II"/>
    <property type="match status" value="1"/>
</dbReference>
<dbReference type="SUPFAM" id="SSF53639">
    <property type="entry name" value="AraD/HMP-PK domain-like"/>
    <property type="match status" value="1"/>
</dbReference>
<accession>A9FCX7</accession>
<gene>
    <name evidence="1" type="primary">mtnB</name>
    <name type="ordered locus">sce1549</name>
</gene>
<evidence type="ECO:0000255" key="1">
    <source>
        <dbReference type="HAMAP-Rule" id="MF_01677"/>
    </source>
</evidence>